<comment type="function">
    <text evidence="2">Plays a role during embryonic arterial endothelium differentiation and vascular morphogenesis through the ACVRL1 receptor-dependent signaling pathway upon stimulation by bone morphogenetic proteins, such as GDF2/BMP9 and BMP10. Involved in the regulation of nociception, acting as a modulator of the interaction between TRPA1 and TRPV1, two molecular sensors and mediators of pain signals in dorsal root ganglia (DRG) neurons. Mechanistically, it weakens their interaction, thereby releasing the inhibition of TRPA1 by TRPV1 and increasing the single-channel open probability of the TRPA1-TRPV1 complex.</text>
</comment>
<comment type="subunit">
    <text evidence="2">Interacts (via C-terminus) with TRPA1 and TRPV1 (By similarity). Interacts with TASOR (By similarity).</text>
</comment>
<comment type="subcellular location">
    <subcellularLocation>
        <location evidence="2">Cell membrane</location>
        <topology evidence="2">Multi-pass membrane protein</topology>
    </subcellularLocation>
    <subcellularLocation>
        <location evidence="5">Membrane</location>
        <topology evidence="5">Multi-pass membrane protein</topology>
    </subcellularLocation>
    <subcellularLocation>
        <location evidence="1">Perikaryon</location>
    </subcellularLocation>
    <subcellularLocation>
        <location evidence="1">Cytoplasm</location>
        <location evidence="1">Perinuclear region</location>
    </subcellularLocation>
    <subcellularLocation>
        <location evidence="1">Endoplasmic reticulum</location>
    </subcellularLocation>
    <text evidence="1">Colocalized with HSPA5 in the endoplasmic reticulum (ER). Enriched in ER microsome. Colocalized with BMP4 in neural cell bodies and neural fibers of the enteric nervous system (By similarity).</text>
</comment>
<reference key="1">
    <citation type="journal article" date="2004" name="Genome Res.">
        <title>The status, quality, and expansion of the NIH full-length cDNA project: the Mammalian Gene Collection (MGC).</title>
        <authorList>
            <consortium name="The MGC Project Team"/>
        </authorList>
    </citation>
    <scope>NUCLEOTIDE SEQUENCE [LARGE SCALE MRNA]</scope>
    <source>
        <tissue>Lung</tissue>
    </source>
</reference>
<reference key="2">
    <citation type="journal article" date="2012" name="Nat. Commun.">
        <title>Quantitative maps of protein phosphorylation sites across 14 different rat organs and tissues.</title>
        <authorList>
            <person name="Lundby A."/>
            <person name="Secher A."/>
            <person name="Lage K."/>
            <person name="Nordsborg N.B."/>
            <person name="Dmytriyev A."/>
            <person name="Lundby C."/>
            <person name="Olsen J.V."/>
        </authorList>
    </citation>
    <scope>PHOSPHORYLATION [LARGE SCALE ANALYSIS] AT SER-15 AND SER-121</scope>
    <scope>IDENTIFICATION BY MASS SPECTROMETRY [LARGE SCALE ANALYSIS]</scope>
</reference>
<evidence type="ECO:0000250" key="1"/>
<evidence type="ECO:0000250" key="2">
    <source>
        <dbReference type="UniProtKB" id="Q9CQG9"/>
    </source>
</evidence>
<evidence type="ECO:0000255" key="3"/>
<evidence type="ECO:0000256" key="4">
    <source>
        <dbReference type="SAM" id="MobiDB-lite"/>
    </source>
</evidence>
<evidence type="ECO:0000305" key="5"/>
<evidence type="ECO:0007744" key="6">
    <source>
    </source>
</evidence>
<dbReference type="EMBL" id="BC092577">
    <property type="protein sequence ID" value="AAH92577.1"/>
    <property type="molecule type" value="mRNA"/>
</dbReference>
<dbReference type="RefSeq" id="NP_001017479.1">
    <property type="nucleotide sequence ID" value="NM_001017479.1"/>
</dbReference>
<dbReference type="RefSeq" id="XP_008766324.1">
    <property type="nucleotide sequence ID" value="XM_008768102.2"/>
</dbReference>
<dbReference type="RefSeq" id="XP_038942553.1">
    <property type="nucleotide sequence ID" value="XM_039086625.2"/>
</dbReference>
<dbReference type="RefSeq" id="XP_063125726.1">
    <property type="nucleotide sequence ID" value="XM_063269656.1"/>
</dbReference>
<dbReference type="RefSeq" id="XP_063125727.1">
    <property type="nucleotide sequence ID" value="XM_063269657.1"/>
</dbReference>
<dbReference type="SMR" id="Q569C0"/>
<dbReference type="FunCoup" id="Q569C0">
    <property type="interactions" value="133"/>
</dbReference>
<dbReference type="STRING" id="10116.ENSRNOP00000003297"/>
<dbReference type="iPTMnet" id="Q569C0"/>
<dbReference type="PhosphoSitePlus" id="Q569C0"/>
<dbReference type="SwissPalm" id="Q569C0"/>
<dbReference type="PaxDb" id="10116-ENSRNOP00000003297"/>
<dbReference type="Ensembl" id="ENSRNOT00000003297.8">
    <property type="protein sequence ID" value="ENSRNOP00000003297.4"/>
    <property type="gene ID" value="ENSRNOG00000002434.8"/>
</dbReference>
<dbReference type="Ensembl" id="ENSRNOT00000097540.1">
    <property type="protein sequence ID" value="ENSRNOP00000097274.1"/>
    <property type="gene ID" value="ENSRNOG00000002434.8"/>
</dbReference>
<dbReference type="GeneID" id="497979"/>
<dbReference type="KEGG" id="rno:497979"/>
<dbReference type="AGR" id="RGD:1560541"/>
<dbReference type="CTD" id="55273"/>
<dbReference type="RGD" id="1560541">
    <property type="gene designation" value="Tmem100"/>
</dbReference>
<dbReference type="eggNOG" id="ENOG502RZCB">
    <property type="taxonomic scope" value="Eukaryota"/>
</dbReference>
<dbReference type="GeneTree" id="ENSGT00940000154322"/>
<dbReference type="HOGENOM" id="CLU_141108_0_0_1"/>
<dbReference type="InParanoid" id="Q569C0"/>
<dbReference type="OMA" id="PMTMEKS"/>
<dbReference type="OrthoDB" id="9893370at2759"/>
<dbReference type="PhylomeDB" id="Q569C0"/>
<dbReference type="TreeFam" id="TF332068"/>
<dbReference type="PRO" id="PR:Q569C0"/>
<dbReference type="Proteomes" id="UP000002494">
    <property type="component" value="Chromosome 10"/>
</dbReference>
<dbReference type="Bgee" id="ENSRNOG00000002434">
    <property type="expression patterns" value="Expressed in lung and 19 other cell types or tissues"/>
</dbReference>
<dbReference type="GO" id="GO:0005783">
    <property type="term" value="C:endoplasmic reticulum"/>
    <property type="evidence" value="ECO:0000266"/>
    <property type="project" value="RGD"/>
</dbReference>
<dbReference type="GO" id="GO:0043204">
    <property type="term" value="C:perikaryon"/>
    <property type="evidence" value="ECO:0000266"/>
    <property type="project" value="RGD"/>
</dbReference>
<dbReference type="GO" id="GO:0048471">
    <property type="term" value="C:perinuclear region of cytoplasm"/>
    <property type="evidence" value="ECO:0000266"/>
    <property type="project" value="RGD"/>
</dbReference>
<dbReference type="GO" id="GO:0005886">
    <property type="term" value="C:plasma membrane"/>
    <property type="evidence" value="ECO:0000250"/>
    <property type="project" value="UniProtKB"/>
</dbReference>
<dbReference type="GO" id="GO:0001525">
    <property type="term" value="P:angiogenesis"/>
    <property type="evidence" value="ECO:0000266"/>
    <property type="project" value="RGD"/>
</dbReference>
<dbReference type="GO" id="GO:0060842">
    <property type="term" value="P:arterial endothelial cell differentiation"/>
    <property type="evidence" value="ECO:0000266"/>
    <property type="project" value="RGD"/>
</dbReference>
<dbReference type="GO" id="GO:0030509">
    <property type="term" value="P:BMP signaling pathway"/>
    <property type="evidence" value="ECO:0000266"/>
    <property type="project" value="RGD"/>
</dbReference>
<dbReference type="GO" id="GO:0071773">
    <property type="term" value="P:cellular response to BMP stimulus"/>
    <property type="evidence" value="ECO:0000266"/>
    <property type="project" value="RGD"/>
</dbReference>
<dbReference type="GO" id="GO:0003197">
    <property type="term" value="P:endocardial cushion development"/>
    <property type="evidence" value="ECO:0000266"/>
    <property type="project" value="RGD"/>
</dbReference>
<dbReference type="GO" id="GO:0003198">
    <property type="term" value="P:epithelial to mesenchymal transition involved in endocardial cushion formation"/>
    <property type="evidence" value="ECO:0000266"/>
    <property type="project" value="RGD"/>
</dbReference>
<dbReference type="GO" id="GO:0001701">
    <property type="term" value="P:in utero embryonic development"/>
    <property type="evidence" value="ECO:0000266"/>
    <property type="project" value="RGD"/>
</dbReference>
<dbReference type="GO" id="GO:0007219">
    <property type="term" value="P:Notch signaling pathway"/>
    <property type="evidence" value="ECO:0000266"/>
    <property type="project" value="RGD"/>
</dbReference>
<dbReference type="GO" id="GO:0045603">
    <property type="term" value="P:positive regulation of endothelial cell differentiation"/>
    <property type="evidence" value="ECO:0000266"/>
    <property type="project" value="RGD"/>
</dbReference>
<dbReference type="GO" id="GO:0051897">
    <property type="term" value="P:positive regulation of phosphatidylinositol 3-kinase/protein kinase B signal transduction"/>
    <property type="evidence" value="ECO:0000266"/>
    <property type="project" value="RGD"/>
</dbReference>
<dbReference type="GO" id="GO:2001214">
    <property type="term" value="P:positive regulation of vasculogenesis"/>
    <property type="evidence" value="ECO:0000266"/>
    <property type="project" value="RGD"/>
</dbReference>
<dbReference type="GO" id="GO:0050848">
    <property type="term" value="P:regulation of calcium-mediated signaling"/>
    <property type="evidence" value="ECO:0000266"/>
    <property type="project" value="RGD"/>
</dbReference>
<dbReference type="GO" id="GO:0051930">
    <property type="term" value="P:regulation of sensory perception of pain"/>
    <property type="evidence" value="ECO:0000250"/>
    <property type="project" value="UniProtKB"/>
</dbReference>
<dbReference type="GO" id="GO:0001570">
    <property type="term" value="P:vasculogenesis"/>
    <property type="evidence" value="ECO:0000266"/>
    <property type="project" value="RGD"/>
</dbReference>
<dbReference type="InterPro" id="IPR032536">
    <property type="entry name" value="TMEM100"/>
</dbReference>
<dbReference type="PANTHER" id="PTHR16100">
    <property type="entry name" value="PHOSPHOINOSITIDE-INTERACTING PROTEIN FAMILY MEMBER"/>
    <property type="match status" value="1"/>
</dbReference>
<dbReference type="PANTHER" id="PTHR16100:SF5">
    <property type="entry name" value="TRANSMEMBRANE PROTEIN 100"/>
    <property type="match status" value="1"/>
</dbReference>
<dbReference type="Pfam" id="PF16311">
    <property type="entry name" value="TMEM100"/>
    <property type="match status" value="1"/>
</dbReference>
<accession>Q569C0</accession>
<sequence>MTEEPTKENLGGPKSPTPVTMEKSPKSEVVVTTVPLVSEVQLTAATGGAELSCYRCIIPFAVVVFITGIVVTAVAYSFNSHGSVISILGLVLLSSGLFLLASSALCWKVRQRNKKVKRRESQTALVVNQRSLFA</sequence>
<organism>
    <name type="scientific">Rattus norvegicus</name>
    <name type="common">Rat</name>
    <dbReference type="NCBI Taxonomy" id="10116"/>
    <lineage>
        <taxon>Eukaryota</taxon>
        <taxon>Metazoa</taxon>
        <taxon>Chordata</taxon>
        <taxon>Craniata</taxon>
        <taxon>Vertebrata</taxon>
        <taxon>Euteleostomi</taxon>
        <taxon>Mammalia</taxon>
        <taxon>Eutheria</taxon>
        <taxon>Euarchontoglires</taxon>
        <taxon>Glires</taxon>
        <taxon>Rodentia</taxon>
        <taxon>Myomorpha</taxon>
        <taxon>Muroidea</taxon>
        <taxon>Muridae</taxon>
        <taxon>Murinae</taxon>
        <taxon>Rattus</taxon>
    </lineage>
</organism>
<proteinExistence type="evidence at protein level"/>
<keyword id="KW-1003">Cell membrane</keyword>
<keyword id="KW-0963">Cytoplasm</keyword>
<keyword id="KW-0217">Developmental protein</keyword>
<keyword id="KW-0221">Differentiation</keyword>
<keyword id="KW-0256">Endoplasmic reticulum</keyword>
<keyword id="KW-0472">Membrane</keyword>
<keyword id="KW-0597">Phosphoprotein</keyword>
<keyword id="KW-1185">Reference proteome</keyword>
<keyword id="KW-0812">Transmembrane</keyword>
<keyword id="KW-1133">Transmembrane helix</keyword>
<feature type="chain" id="PRO_0000240848" description="Transmembrane protein 100">
    <location>
        <begin position="1"/>
        <end position="134"/>
    </location>
</feature>
<feature type="transmembrane region" description="Helical" evidence="3">
    <location>
        <begin position="56"/>
        <end position="76"/>
    </location>
</feature>
<feature type="transmembrane region" description="Helical" evidence="3">
    <location>
        <begin position="84"/>
        <end position="104"/>
    </location>
</feature>
<feature type="region of interest" description="Disordered" evidence="4">
    <location>
        <begin position="1"/>
        <end position="24"/>
    </location>
</feature>
<feature type="modified residue" description="Phosphoserine" evidence="6">
    <location>
        <position position="15"/>
    </location>
</feature>
<feature type="modified residue" description="Phosphoserine" evidence="6">
    <location>
        <position position="121"/>
    </location>
</feature>
<protein>
    <recommendedName>
        <fullName>Transmembrane protein 100</fullName>
    </recommendedName>
</protein>
<name>TM100_RAT</name>
<gene>
    <name type="primary">Tmem100</name>
</gene>